<protein>
    <recommendedName>
        <fullName evidence="1">DNA-directed RNA polymerase subunit omega</fullName>
        <shortName evidence="1">RNAP omega subunit</shortName>
        <ecNumber evidence="1">2.7.7.6</ecNumber>
    </recommendedName>
    <alternativeName>
        <fullName evidence="1">RNA polymerase omega subunit</fullName>
    </alternativeName>
    <alternativeName>
        <fullName evidence="1">Transcriptase subunit omega</fullName>
    </alternativeName>
</protein>
<feature type="chain" id="PRO_1000006010" description="DNA-directed RNA polymerase subunit omega">
    <location>
        <begin position="1"/>
        <end position="92"/>
    </location>
</feature>
<reference key="1">
    <citation type="submission" date="2006-08" db="EMBL/GenBank/DDBJ databases">
        <title>Complete sequence of Shewanella frigidimarina NCIMB 400.</title>
        <authorList>
            <consortium name="US DOE Joint Genome Institute"/>
            <person name="Copeland A."/>
            <person name="Lucas S."/>
            <person name="Lapidus A."/>
            <person name="Barry K."/>
            <person name="Detter J.C."/>
            <person name="Glavina del Rio T."/>
            <person name="Hammon N."/>
            <person name="Israni S."/>
            <person name="Dalin E."/>
            <person name="Tice H."/>
            <person name="Pitluck S."/>
            <person name="Fredrickson J.K."/>
            <person name="Kolker E."/>
            <person name="McCuel L.A."/>
            <person name="DiChristina T."/>
            <person name="Nealson K.H."/>
            <person name="Newman D."/>
            <person name="Tiedje J.M."/>
            <person name="Zhou J."/>
            <person name="Romine M.F."/>
            <person name="Culley D.E."/>
            <person name="Serres M."/>
            <person name="Chertkov O."/>
            <person name="Brettin T."/>
            <person name="Bruce D."/>
            <person name="Han C."/>
            <person name="Tapia R."/>
            <person name="Gilna P."/>
            <person name="Schmutz J."/>
            <person name="Larimer F."/>
            <person name="Land M."/>
            <person name="Hauser L."/>
            <person name="Kyrpides N."/>
            <person name="Mikhailova N."/>
            <person name="Richardson P."/>
        </authorList>
    </citation>
    <scope>NUCLEOTIDE SEQUENCE [LARGE SCALE GENOMIC DNA]</scope>
    <source>
        <strain>NCIMB 400</strain>
    </source>
</reference>
<organism>
    <name type="scientific">Shewanella frigidimarina (strain NCIMB 400)</name>
    <dbReference type="NCBI Taxonomy" id="318167"/>
    <lineage>
        <taxon>Bacteria</taxon>
        <taxon>Pseudomonadati</taxon>
        <taxon>Pseudomonadota</taxon>
        <taxon>Gammaproteobacteria</taxon>
        <taxon>Alteromonadales</taxon>
        <taxon>Shewanellaceae</taxon>
        <taxon>Shewanella</taxon>
    </lineage>
</organism>
<proteinExistence type="inferred from homology"/>
<name>RPOZ_SHEFN</name>
<sequence length="92" mass="10088">MARVTVEDAVNKIGNRFDMILVAARRARQIAVQGKEPMVDEMNDKPTVVALREIELGLVTSNTLDADERQTVREREAAEIAAVAAIAEGRVL</sequence>
<gene>
    <name evidence="1" type="primary">rpoZ</name>
    <name type="ordered locus">Sfri_0364</name>
</gene>
<keyword id="KW-0240">DNA-directed RNA polymerase</keyword>
<keyword id="KW-0548">Nucleotidyltransferase</keyword>
<keyword id="KW-1185">Reference proteome</keyword>
<keyword id="KW-0804">Transcription</keyword>
<keyword id="KW-0808">Transferase</keyword>
<evidence type="ECO:0000255" key="1">
    <source>
        <dbReference type="HAMAP-Rule" id="MF_00366"/>
    </source>
</evidence>
<accession>Q088T8</accession>
<comment type="function">
    <text evidence="1">Promotes RNA polymerase assembly. Latches the N- and C-terminal regions of the beta' subunit thereby facilitating its interaction with the beta and alpha subunits.</text>
</comment>
<comment type="catalytic activity">
    <reaction evidence="1">
        <text>RNA(n) + a ribonucleoside 5'-triphosphate = RNA(n+1) + diphosphate</text>
        <dbReference type="Rhea" id="RHEA:21248"/>
        <dbReference type="Rhea" id="RHEA-COMP:14527"/>
        <dbReference type="Rhea" id="RHEA-COMP:17342"/>
        <dbReference type="ChEBI" id="CHEBI:33019"/>
        <dbReference type="ChEBI" id="CHEBI:61557"/>
        <dbReference type="ChEBI" id="CHEBI:140395"/>
        <dbReference type="EC" id="2.7.7.6"/>
    </reaction>
</comment>
<comment type="subunit">
    <text evidence="1">The RNAP catalytic core consists of 2 alpha, 1 beta, 1 beta' and 1 omega subunit. When a sigma factor is associated with the core the holoenzyme is formed, which can initiate transcription.</text>
</comment>
<comment type="similarity">
    <text evidence="1">Belongs to the RNA polymerase subunit omega family.</text>
</comment>
<dbReference type="EC" id="2.7.7.6" evidence="1"/>
<dbReference type="EMBL" id="CP000447">
    <property type="protein sequence ID" value="ABI70227.1"/>
    <property type="molecule type" value="Genomic_DNA"/>
</dbReference>
<dbReference type="RefSeq" id="WP_011635854.1">
    <property type="nucleotide sequence ID" value="NC_008345.1"/>
</dbReference>
<dbReference type="SMR" id="Q088T8"/>
<dbReference type="STRING" id="318167.Sfri_0364"/>
<dbReference type="GeneID" id="90570639"/>
<dbReference type="KEGG" id="sfr:Sfri_0364"/>
<dbReference type="eggNOG" id="COG1758">
    <property type="taxonomic scope" value="Bacteria"/>
</dbReference>
<dbReference type="HOGENOM" id="CLU_125406_5_3_6"/>
<dbReference type="OrthoDB" id="9796300at2"/>
<dbReference type="Proteomes" id="UP000000684">
    <property type="component" value="Chromosome"/>
</dbReference>
<dbReference type="GO" id="GO:0000428">
    <property type="term" value="C:DNA-directed RNA polymerase complex"/>
    <property type="evidence" value="ECO:0007669"/>
    <property type="project" value="UniProtKB-KW"/>
</dbReference>
<dbReference type="GO" id="GO:0003677">
    <property type="term" value="F:DNA binding"/>
    <property type="evidence" value="ECO:0007669"/>
    <property type="project" value="UniProtKB-UniRule"/>
</dbReference>
<dbReference type="GO" id="GO:0003899">
    <property type="term" value="F:DNA-directed RNA polymerase activity"/>
    <property type="evidence" value="ECO:0007669"/>
    <property type="project" value="UniProtKB-UniRule"/>
</dbReference>
<dbReference type="GO" id="GO:0006351">
    <property type="term" value="P:DNA-templated transcription"/>
    <property type="evidence" value="ECO:0007669"/>
    <property type="project" value="UniProtKB-UniRule"/>
</dbReference>
<dbReference type="Gene3D" id="3.90.940.10">
    <property type="match status" value="1"/>
</dbReference>
<dbReference type="HAMAP" id="MF_00366">
    <property type="entry name" value="RNApol_bact_RpoZ"/>
    <property type="match status" value="1"/>
</dbReference>
<dbReference type="InterPro" id="IPR003716">
    <property type="entry name" value="DNA-dir_RNA_pol_omega"/>
</dbReference>
<dbReference type="InterPro" id="IPR006110">
    <property type="entry name" value="Pol_omega/Rpo6/RPB6"/>
</dbReference>
<dbReference type="InterPro" id="IPR036161">
    <property type="entry name" value="RPB6/omega-like_sf"/>
</dbReference>
<dbReference type="NCBIfam" id="TIGR00690">
    <property type="entry name" value="rpoZ"/>
    <property type="match status" value="1"/>
</dbReference>
<dbReference type="PANTHER" id="PTHR34476">
    <property type="entry name" value="DNA-DIRECTED RNA POLYMERASE SUBUNIT OMEGA"/>
    <property type="match status" value="1"/>
</dbReference>
<dbReference type="PANTHER" id="PTHR34476:SF1">
    <property type="entry name" value="DNA-DIRECTED RNA POLYMERASE SUBUNIT OMEGA"/>
    <property type="match status" value="1"/>
</dbReference>
<dbReference type="Pfam" id="PF01192">
    <property type="entry name" value="RNA_pol_Rpb6"/>
    <property type="match status" value="1"/>
</dbReference>
<dbReference type="SMART" id="SM01409">
    <property type="entry name" value="RNA_pol_Rpb6"/>
    <property type="match status" value="1"/>
</dbReference>
<dbReference type="SUPFAM" id="SSF63562">
    <property type="entry name" value="RPB6/omega subunit-like"/>
    <property type="match status" value="1"/>
</dbReference>